<accession>Q126R8</accession>
<comment type="catalytic activity">
    <reaction evidence="1">
        <text>2-formamido-N(1)-(5-O-phospho-beta-D-ribosyl)acetamidine + ATP = 5-amino-1-(5-phospho-beta-D-ribosyl)imidazole + ADP + phosphate + H(+)</text>
        <dbReference type="Rhea" id="RHEA:23032"/>
        <dbReference type="ChEBI" id="CHEBI:15378"/>
        <dbReference type="ChEBI" id="CHEBI:30616"/>
        <dbReference type="ChEBI" id="CHEBI:43474"/>
        <dbReference type="ChEBI" id="CHEBI:137981"/>
        <dbReference type="ChEBI" id="CHEBI:147287"/>
        <dbReference type="ChEBI" id="CHEBI:456216"/>
        <dbReference type="EC" id="6.3.3.1"/>
    </reaction>
</comment>
<comment type="pathway">
    <text evidence="1">Purine metabolism; IMP biosynthesis via de novo pathway; 5-amino-1-(5-phospho-D-ribosyl)imidazole from N(2)-formyl-N(1)-(5-phospho-D-ribosyl)glycinamide: step 2/2.</text>
</comment>
<comment type="subcellular location">
    <subcellularLocation>
        <location evidence="1">Cytoplasm</location>
    </subcellularLocation>
</comment>
<comment type="similarity">
    <text evidence="1">Belongs to the AIR synthase family.</text>
</comment>
<dbReference type="EC" id="6.3.3.1" evidence="1"/>
<dbReference type="EMBL" id="CP000316">
    <property type="protein sequence ID" value="ABE45474.1"/>
    <property type="molecule type" value="Genomic_DNA"/>
</dbReference>
<dbReference type="RefSeq" id="WP_011484468.1">
    <property type="nucleotide sequence ID" value="NC_007948.1"/>
</dbReference>
<dbReference type="SMR" id="Q126R8"/>
<dbReference type="STRING" id="296591.Bpro_3566"/>
<dbReference type="KEGG" id="pol:Bpro_3566"/>
<dbReference type="eggNOG" id="COG0150">
    <property type="taxonomic scope" value="Bacteria"/>
</dbReference>
<dbReference type="HOGENOM" id="CLU_047116_0_0_4"/>
<dbReference type="OrthoDB" id="9777881at2"/>
<dbReference type="UniPathway" id="UPA00074">
    <property type="reaction ID" value="UER00129"/>
</dbReference>
<dbReference type="Proteomes" id="UP000001983">
    <property type="component" value="Chromosome"/>
</dbReference>
<dbReference type="GO" id="GO:0005829">
    <property type="term" value="C:cytosol"/>
    <property type="evidence" value="ECO:0007669"/>
    <property type="project" value="TreeGrafter"/>
</dbReference>
<dbReference type="GO" id="GO:0005524">
    <property type="term" value="F:ATP binding"/>
    <property type="evidence" value="ECO:0007669"/>
    <property type="project" value="UniProtKB-KW"/>
</dbReference>
<dbReference type="GO" id="GO:0004637">
    <property type="term" value="F:phosphoribosylamine-glycine ligase activity"/>
    <property type="evidence" value="ECO:0007669"/>
    <property type="project" value="TreeGrafter"/>
</dbReference>
<dbReference type="GO" id="GO:0004641">
    <property type="term" value="F:phosphoribosylformylglycinamidine cyclo-ligase activity"/>
    <property type="evidence" value="ECO:0007669"/>
    <property type="project" value="UniProtKB-UniRule"/>
</dbReference>
<dbReference type="GO" id="GO:0006189">
    <property type="term" value="P:'de novo' IMP biosynthetic process"/>
    <property type="evidence" value="ECO:0007669"/>
    <property type="project" value="UniProtKB-UniRule"/>
</dbReference>
<dbReference type="GO" id="GO:0046084">
    <property type="term" value="P:adenine biosynthetic process"/>
    <property type="evidence" value="ECO:0007669"/>
    <property type="project" value="TreeGrafter"/>
</dbReference>
<dbReference type="CDD" id="cd02196">
    <property type="entry name" value="PurM"/>
    <property type="match status" value="1"/>
</dbReference>
<dbReference type="FunFam" id="3.30.1330.10:FF:000001">
    <property type="entry name" value="Phosphoribosylformylglycinamidine cyclo-ligase"/>
    <property type="match status" value="1"/>
</dbReference>
<dbReference type="FunFam" id="3.90.650.10:FF:000001">
    <property type="entry name" value="Phosphoribosylformylglycinamidine cyclo-ligase"/>
    <property type="match status" value="1"/>
</dbReference>
<dbReference type="Gene3D" id="3.90.650.10">
    <property type="entry name" value="PurM-like C-terminal domain"/>
    <property type="match status" value="1"/>
</dbReference>
<dbReference type="Gene3D" id="3.30.1330.10">
    <property type="entry name" value="PurM-like, N-terminal domain"/>
    <property type="match status" value="1"/>
</dbReference>
<dbReference type="HAMAP" id="MF_00741">
    <property type="entry name" value="AIRS"/>
    <property type="match status" value="1"/>
</dbReference>
<dbReference type="InterPro" id="IPR010918">
    <property type="entry name" value="PurM-like_C_dom"/>
</dbReference>
<dbReference type="InterPro" id="IPR036676">
    <property type="entry name" value="PurM-like_C_sf"/>
</dbReference>
<dbReference type="InterPro" id="IPR016188">
    <property type="entry name" value="PurM-like_N"/>
</dbReference>
<dbReference type="InterPro" id="IPR036921">
    <property type="entry name" value="PurM-like_N_sf"/>
</dbReference>
<dbReference type="InterPro" id="IPR004733">
    <property type="entry name" value="PurM_cligase"/>
</dbReference>
<dbReference type="NCBIfam" id="TIGR00878">
    <property type="entry name" value="purM"/>
    <property type="match status" value="1"/>
</dbReference>
<dbReference type="PANTHER" id="PTHR10520:SF12">
    <property type="entry name" value="TRIFUNCTIONAL PURINE BIOSYNTHETIC PROTEIN ADENOSINE-3"/>
    <property type="match status" value="1"/>
</dbReference>
<dbReference type="PANTHER" id="PTHR10520">
    <property type="entry name" value="TRIFUNCTIONAL PURINE BIOSYNTHETIC PROTEIN ADENOSINE-3-RELATED"/>
    <property type="match status" value="1"/>
</dbReference>
<dbReference type="Pfam" id="PF00586">
    <property type="entry name" value="AIRS"/>
    <property type="match status" value="1"/>
</dbReference>
<dbReference type="Pfam" id="PF02769">
    <property type="entry name" value="AIRS_C"/>
    <property type="match status" value="1"/>
</dbReference>
<dbReference type="SUPFAM" id="SSF56042">
    <property type="entry name" value="PurM C-terminal domain-like"/>
    <property type="match status" value="1"/>
</dbReference>
<dbReference type="SUPFAM" id="SSF55326">
    <property type="entry name" value="PurM N-terminal domain-like"/>
    <property type="match status" value="1"/>
</dbReference>
<proteinExistence type="inferred from homology"/>
<name>PUR5_POLSJ</name>
<keyword id="KW-0067">ATP-binding</keyword>
<keyword id="KW-0963">Cytoplasm</keyword>
<keyword id="KW-0436">Ligase</keyword>
<keyword id="KW-0547">Nucleotide-binding</keyword>
<keyword id="KW-0658">Purine biosynthesis</keyword>
<keyword id="KW-1185">Reference proteome</keyword>
<reference key="1">
    <citation type="journal article" date="2008" name="Appl. Environ. Microbiol.">
        <title>The genome of Polaromonas sp. strain JS666: insights into the evolution of a hydrocarbon- and xenobiotic-degrading bacterium, and features of relevance to biotechnology.</title>
        <authorList>
            <person name="Mattes T.E."/>
            <person name="Alexander A.K."/>
            <person name="Richardson P.M."/>
            <person name="Munk A.C."/>
            <person name="Han C.S."/>
            <person name="Stothard P."/>
            <person name="Coleman N.V."/>
        </authorList>
    </citation>
    <scope>NUCLEOTIDE SEQUENCE [LARGE SCALE GENOMIC DNA]</scope>
    <source>
        <strain>JS666 / ATCC BAA-500</strain>
    </source>
</reference>
<feature type="chain" id="PRO_0000258379" description="Phosphoribosylformylglycinamidine cyclo-ligase">
    <location>
        <begin position="1"/>
        <end position="346"/>
    </location>
</feature>
<sequence>MTTSSSSPLSYKDAGVDIDAGDALVERIKPLAKKTMREGVLAGIGGFGALFEVPKRYKEPVLVSGTDGVGTKLRLAFEWNMHDTVGIDLVAMSVNDVLVQGAEPLFFLDYFACGKLDVDTAAAVVGGIAKGCELSGCALIGGETAEMPGMYPEGEYDLAGFAVGAVEKSKILTGKEVQPGDVVLGLASSGVHSNGFSLVRKCIERAGADRPATLDGKPFKQALMEPTRLYVKNVLAALAAHPIKALAHITGGGLLENIPRVLPEGTAAHLKKGSWPQTELFAWLQKTAGIDDFEMNRTFNNGIGMVVVVDAANAQATAKTLRDAGEQVYEIGVIAPRGEGAAVIVG</sequence>
<organism>
    <name type="scientific">Polaromonas sp. (strain JS666 / ATCC BAA-500)</name>
    <dbReference type="NCBI Taxonomy" id="296591"/>
    <lineage>
        <taxon>Bacteria</taxon>
        <taxon>Pseudomonadati</taxon>
        <taxon>Pseudomonadota</taxon>
        <taxon>Betaproteobacteria</taxon>
        <taxon>Burkholderiales</taxon>
        <taxon>Comamonadaceae</taxon>
        <taxon>Polaromonas</taxon>
    </lineage>
</organism>
<evidence type="ECO:0000255" key="1">
    <source>
        <dbReference type="HAMAP-Rule" id="MF_00741"/>
    </source>
</evidence>
<gene>
    <name evidence="1" type="primary">purM</name>
    <name type="ordered locus">Bpro_3566</name>
</gene>
<protein>
    <recommendedName>
        <fullName evidence="1">Phosphoribosylformylglycinamidine cyclo-ligase</fullName>
        <ecNumber evidence="1">6.3.3.1</ecNumber>
    </recommendedName>
    <alternativeName>
        <fullName evidence="1">AIR synthase</fullName>
    </alternativeName>
    <alternativeName>
        <fullName evidence="1">AIRS</fullName>
    </alternativeName>
    <alternativeName>
        <fullName evidence="1">Phosphoribosyl-aminoimidazole synthetase</fullName>
    </alternativeName>
</protein>